<dbReference type="EMBL" id="CP000282">
    <property type="protein sequence ID" value="ABD79600.1"/>
    <property type="molecule type" value="Genomic_DNA"/>
</dbReference>
<dbReference type="RefSeq" id="WP_011466824.1">
    <property type="nucleotide sequence ID" value="NC_007912.1"/>
</dbReference>
<dbReference type="SMR" id="Q21NX9"/>
<dbReference type="STRING" id="203122.Sde_0336"/>
<dbReference type="GeneID" id="98612038"/>
<dbReference type="KEGG" id="sde:Sde_0336"/>
<dbReference type="eggNOG" id="COG2924">
    <property type="taxonomic scope" value="Bacteria"/>
</dbReference>
<dbReference type="HOGENOM" id="CLU_170994_0_0_6"/>
<dbReference type="OrthoDB" id="9804318at2"/>
<dbReference type="Proteomes" id="UP000001947">
    <property type="component" value="Chromosome"/>
</dbReference>
<dbReference type="GO" id="GO:0005829">
    <property type="term" value="C:cytosol"/>
    <property type="evidence" value="ECO:0007669"/>
    <property type="project" value="TreeGrafter"/>
</dbReference>
<dbReference type="GO" id="GO:0005506">
    <property type="term" value="F:iron ion binding"/>
    <property type="evidence" value="ECO:0007669"/>
    <property type="project" value="UniProtKB-UniRule"/>
</dbReference>
<dbReference type="GO" id="GO:0034599">
    <property type="term" value="P:cellular response to oxidative stress"/>
    <property type="evidence" value="ECO:0007669"/>
    <property type="project" value="TreeGrafter"/>
</dbReference>
<dbReference type="FunFam" id="1.10.3880.10:FF:000001">
    <property type="entry name" value="Probable Fe(2+)-trafficking protein"/>
    <property type="match status" value="1"/>
</dbReference>
<dbReference type="Gene3D" id="1.10.3880.10">
    <property type="entry name" value="Fe(II) trafficking protein YggX"/>
    <property type="match status" value="1"/>
</dbReference>
<dbReference type="HAMAP" id="MF_00686">
    <property type="entry name" value="Fe_traffic_YggX"/>
    <property type="match status" value="1"/>
</dbReference>
<dbReference type="InterPro" id="IPR007457">
    <property type="entry name" value="Fe_traffick_prot_YggX"/>
</dbReference>
<dbReference type="InterPro" id="IPR036766">
    <property type="entry name" value="Fe_traffick_prot_YggX_sf"/>
</dbReference>
<dbReference type="NCBIfam" id="NF003817">
    <property type="entry name" value="PRK05408.1"/>
    <property type="match status" value="1"/>
</dbReference>
<dbReference type="PANTHER" id="PTHR36965">
    <property type="entry name" value="FE(2+)-TRAFFICKING PROTEIN-RELATED"/>
    <property type="match status" value="1"/>
</dbReference>
<dbReference type="PANTHER" id="PTHR36965:SF1">
    <property type="entry name" value="FE(2+)-TRAFFICKING PROTEIN-RELATED"/>
    <property type="match status" value="1"/>
</dbReference>
<dbReference type="Pfam" id="PF04362">
    <property type="entry name" value="Iron_traffic"/>
    <property type="match status" value="1"/>
</dbReference>
<dbReference type="PIRSF" id="PIRSF029827">
    <property type="entry name" value="Fe_traffic_YggX"/>
    <property type="match status" value="1"/>
</dbReference>
<dbReference type="SUPFAM" id="SSF111148">
    <property type="entry name" value="YggX-like"/>
    <property type="match status" value="1"/>
</dbReference>
<name>FETP_SACD2</name>
<organism>
    <name type="scientific">Saccharophagus degradans (strain 2-40 / ATCC 43961 / DSM 17024)</name>
    <dbReference type="NCBI Taxonomy" id="203122"/>
    <lineage>
        <taxon>Bacteria</taxon>
        <taxon>Pseudomonadati</taxon>
        <taxon>Pseudomonadota</taxon>
        <taxon>Gammaproteobacteria</taxon>
        <taxon>Cellvibrionales</taxon>
        <taxon>Cellvibrionaceae</taxon>
        <taxon>Saccharophagus</taxon>
    </lineage>
</organism>
<gene>
    <name type="ordered locus">Sde_0336</name>
</gene>
<protein>
    <recommendedName>
        <fullName evidence="1">Probable Fe(2+)-trafficking protein</fullName>
    </recommendedName>
</protein>
<reference key="1">
    <citation type="journal article" date="2008" name="PLoS Genet.">
        <title>Complete genome sequence of the complex carbohydrate-degrading marine bacterium, Saccharophagus degradans strain 2-40 T.</title>
        <authorList>
            <person name="Weiner R.M."/>
            <person name="Taylor L.E. II"/>
            <person name="Henrissat B."/>
            <person name="Hauser L."/>
            <person name="Land M."/>
            <person name="Coutinho P.M."/>
            <person name="Rancurel C."/>
            <person name="Saunders E.H."/>
            <person name="Longmire A.G."/>
            <person name="Zhang H."/>
            <person name="Bayer E.A."/>
            <person name="Gilbert H.J."/>
            <person name="Larimer F."/>
            <person name="Zhulin I.B."/>
            <person name="Ekborg N.A."/>
            <person name="Lamed R."/>
            <person name="Richardson P.M."/>
            <person name="Borovok I."/>
            <person name="Hutcheson S."/>
        </authorList>
    </citation>
    <scope>NUCLEOTIDE SEQUENCE [LARGE SCALE GENOMIC DNA]</scope>
    <source>
        <strain>2-40 / ATCC 43961 / DSM 17024</strain>
    </source>
</reference>
<feature type="chain" id="PRO_0000246115" description="Probable Fe(2+)-trafficking protein">
    <location>
        <begin position="1"/>
        <end position="90"/>
    </location>
</feature>
<accession>Q21NX9</accession>
<proteinExistence type="inferred from homology"/>
<comment type="function">
    <text evidence="1">Could be a mediator in iron transactions between iron acquisition and iron-requiring processes, such as synthesis and/or repair of Fe-S clusters in biosynthetic enzymes.</text>
</comment>
<comment type="similarity">
    <text evidence="1">Belongs to the Fe(2+)-trafficking protein family.</text>
</comment>
<keyword id="KW-0408">Iron</keyword>
<keyword id="KW-1185">Reference proteome</keyword>
<evidence type="ECO:0000255" key="1">
    <source>
        <dbReference type="HAMAP-Rule" id="MF_00686"/>
    </source>
</evidence>
<sequence>MSRTVNCRKFKQELEGLDFPPMPGAKGQDIFENVSKKAWQEWLSHQTMLINEKHLNMMDLTDRTYLNQQMDKFLSGEEYDQAEGYVAPEK</sequence>